<accession>O43556</accession>
<accession>B2R8N2</accession>
<accession>D6W5Q8</accession>
<accession>E9PF60</accession>
<accession>G5E9K6</accession>
<accession>Q6L8P0</accession>
<accession>Q75MH8</accession>
<accession>Q8NFG8</accession>
<accession>Q8WW28</accession>
<organism>
    <name type="scientific">Homo sapiens</name>
    <name type="common">Human</name>
    <dbReference type="NCBI Taxonomy" id="9606"/>
    <lineage>
        <taxon>Eukaryota</taxon>
        <taxon>Metazoa</taxon>
        <taxon>Chordata</taxon>
        <taxon>Craniata</taxon>
        <taxon>Vertebrata</taxon>
        <taxon>Euteleostomi</taxon>
        <taxon>Mammalia</taxon>
        <taxon>Eutheria</taxon>
        <taxon>Euarchontoglires</taxon>
        <taxon>Primates</taxon>
        <taxon>Haplorrhini</taxon>
        <taxon>Catarrhini</taxon>
        <taxon>Hominidae</taxon>
        <taxon>Homo</taxon>
    </lineage>
</organism>
<evidence type="ECO:0000250" key="1"/>
<evidence type="ECO:0000255" key="2"/>
<evidence type="ECO:0000269" key="3">
    <source>
    </source>
</evidence>
<evidence type="ECO:0000269" key="4">
    <source>
    </source>
</evidence>
<evidence type="ECO:0000269" key="5">
    <source>
    </source>
</evidence>
<evidence type="ECO:0000269" key="6">
    <source>
    </source>
</evidence>
<evidence type="ECO:0000269" key="7">
    <source>
    </source>
</evidence>
<evidence type="ECO:0000269" key="8">
    <source>
    </source>
</evidence>
<evidence type="ECO:0000269" key="9">
    <source>
    </source>
</evidence>
<evidence type="ECO:0000269" key="10">
    <source>
    </source>
</evidence>
<evidence type="ECO:0000269" key="11">
    <source>
    </source>
</evidence>
<evidence type="ECO:0000269" key="12">
    <source>
    </source>
</evidence>
<evidence type="ECO:0000269" key="13">
    <source>
    </source>
</evidence>
<evidence type="ECO:0000269" key="14">
    <source>
    </source>
</evidence>
<evidence type="ECO:0000303" key="15">
    <source>
    </source>
</evidence>
<evidence type="ECO:0000305" key="16"/>
<sequence length="437" mass="49851">MQLPRWWELGDPCAWTGQGRGTRRMSPATTGTFLLTVYSIFSKVHSDRNVYPSAGVLFVHVLEREYFKGEFPPYPKPGEISNDPITFNTNLMGYPDRPGWLRYIQRTPYSDGVLYGSPTAENVGKPTIIEITAYNRRTFETARHNLIINIMSAEDFPLPYQAEFFIKNMNVEEMLASEVLGDFLGAVKNVWQPERLNAINITSALDRGGRVPLPINDLKEGVYVMVGADVPFSSCLREVENPQNQLRCSQEMEPVITCDKKFRTQFYIDWCKISLVDKTKQVSTYQEVIRGEGILPDGGEYKPPSDSLKSRDYYTDFLITLAVPSAVALVLFLILAYIMCCRREGVEKRNMQTPDIQLVHHSAIQKSTKELRDMSKNREIAWPLSTLPVFHPVTGEIIPPLHTDNYDSTNMPLMQTQQNLPHQTQIPQQQTTGKWYP</sequence>
<proteinExistence type="evidence at protein level"/>
<keyword id="KW-0025">Alternative splicing</keyword>
<keyword id="KW-1003">Cell membrane</keyword>
<keyword id="KW-0966">Cell projection</keyword>
<keyword id="KW-0963">Cytoplasm</keyword>
<keyword id="KW-0206">Cytoskeleton</keyword>
<keyword id="KW-0225">Disease variant</keyword>
<keyword id="KW-1023">Dystonia</keyword>
<keyword id="KW-0325">Glycoprotein</keyword>
<keyword id="KW-0333">Golgi apparatus</keyword>
<keyword id="KW-0472">Membrane</keyword>
<keyword id="KW-1267">Proteomics identification</keyword>
<keyword id="KW-1185">Reference proteome</keyword>
<keyword id="KW-0812">Transmembrane</keyword>
<keyword id="KW-1133">Transmembrane helix</keyword>
<keyword id="KW-0832">Ubl conjugation</keyword>
<feature type="chain" id="PRO_0000031677" description="Epsilon-sarcoglycan">
    <location>
        <begin position="1"/>
        <end position="437"/>
    </location>
</feature>
<feature type="topological domain" description="Extracellular" evidence="2">
    <location>
        <begin position="1"/>
        <end position="317"/>
    </location>
</feature>
<feature type="transmembrane region" description="Helical" evidence="2">
    <location>
        <begin position="318"/>
        <end position="338"/>
    </location>
</feature>
<feature type="topological domain" description="Cytoplasmic" evidence="2">
    <location>
        <begin position="339"/>
        <end position="437"/>
    </location>
</feature>
<feature type="glycosylation site" description="N-linked (GlcNAc...) asparagine" evidence="13">
    <location>
        <position position="200"/>
    </location>
</feature>
<feature type="splice variant" id="VSP_045092" description="In isoform 2." evidence="15">
    <location>
        <begin position="347"/>
        <end position="355"/>
    </location>
</feature>
<feature type="splice variant" id="VSP_054079" description="In isoform 3." evidence="16">
    <original>Q</original>
    <variation>QWSFAPVAQAGVQWSDLGSLQPPPPR</variation>
    <location>
        <position position="418"/>
    </location>
</feature>
<feature type="splice variant" id="VSP_045093" description="In isoform 2." evidence="15">
    <original>KWYP</original>
    <variation>DFRLTTFQRFEVNGIPEERKLTEAMNL</variation>
    <location>
        <begin position="434"/>
        <end position="437"/>
    </location>
</feature>
<feature type="sequence variant" id="VAR_066732" description="In DYT11." evidence="10">
    <original>T</original>
    <variation>R</variation>
    <location>
        <position position="36"/>
    </location>
</feature>
<feature type="sequence variant" id="VAR_058088" description="In dbSNP:rs11548284." evidence="7">
    <original>N</original>
    <variation>S</variation>
    <location>
        <position position="49"/>
    </location>
</feature>
<feature type="sequence variant" id="VAR_066733" description="In DYT11; affects protein stability; the mutant undergoes endoplasmic reticulum-associated degradation." evidence="5 14">
    <original>H</original>
    <variation>P</variation>
    <location>
        <position position="60"/>
    </location>
</feature>
<feature type="sequence variant" id="VAR_066734" description="In DYT11; affects protein stability; the mutant undergoes endoplasmic reticulum-associated degradation." evidence="6 14">
    <original>H</original>
    <variation>R</variation>
    <location>
        <position position="60"/>
    </location>
</feature>
<feature type="sequence variant" id="VAR_066735" description="In DYT11; results in gain-of-glycosylation; the mutant is targeted to the plasma membrane at reduced levels compared to wild-type; dbSNP:rs1804082499." evidence="8 14">
    <original>M</original>
    <variation>T</variation>
    <location>
        <position position="92"/>
    </location>
</feature>
<feature type="sequence variant" id="VAR_066736" description="In DYT11." evidence="11">
    <original>W</original>
    <variation>G</variation>
    <location>
        <position position="100"/>
    </location>
</feature>
<feature type="sequence variant" id="VAR_066737" description="In DYT11." evidence="9">
    <original>G</original>
    <variation>R</variation>
    <location>
        <position position="112"/>
    </location>
</feature>
<feature type="sequence variant" id="VAR_066738" description="In DYT11; affects protein stability; the mutant undergoes endoplasmic reticulum-associated degradation; dbSNP:rs2116958989." evidence="8 11 14">
    <original>Y</original>
    <variation>C</variation>
    <location>
        <position position="115"/>
    </location>
</feature>
<feature type="sequence variant" id="VAR_066739" description="In DYT11." evidence="12">
    <original>L</original>
    <variation>S</variation>
    <location>
        <position position="175"/>
    </location>
</feature>
<feature type="sequence variant" id="VAR_066740" description="In DYT11." evidence="12">
    <original>S</original>
    <variation>C</variation>
    <location>
        <position position="177"/>
    </location>
</feature>
<feature type="sequence variant" id="VAR_066741" description="In DYT11; affects protein stability; the mutant undergoes endoplasmic reticulum-associated degradation; dbSNP:rs1064794321." evidence="10">
    <original>L</original>
    <variation>P</variation>
    <location>
        <position position="184"/>
    </location>
</feature>
<feature type="sequence variant" id="VAR_026750" description="In DYT11; dbSNP:rs121908491." evidence="4">
    <original>L</original>
    <variation>R</variation>
    <location>
        <position position="196"/>
    </location>
</feature>
<feature type="sequence variant" id="VAR_066742" description="In DYT11; affects protein stability; the mutant undergoes endoplasmic reticulum-associated degradation." evidence="12 14">
    <original>W</original>
    <variation>R</variation>
    <location>
        <position position="270"/>
    </location>
</feature>
<feature type="sequence variant" id="VAR_066743" description="In DYT11; affects protein stability; the mutant undergoes endoplasmic reticulum-associated degradation; dbSNP:rs372686312." evidence="8 14">
    <original>C</original>
    <variation>Y</variation>
    <location>
        <position position="271"/>
    </location>
</feature>
<feature type="sequence variant" id="VAR_058089" description="In dbSNP:rs17851923." evidence="7">
    <original>P</original>
    <variation>H</variation>
    <location>
        <position position="399"/>
    </location>
</feature>
<feature type="sequence conflict" description="In Ref. 3; AAM64204." evidence="16" ref="3">
    <original>G</original>
    <variation>S</variation>
    <location>
        <position position="78"/>
    </location>
</feature>
<name>SGCE_HUMAN</name>
<reference key="1">
    <citation type="journal article" date="1998" name="FEBS Lett.">
        <title>Human epsilon-sarcoglycan is highly related to alpha-sarcoglycan (adhalin), the limb girdle muscular dystrophy 2D gene.</title>
        <authorList>
            <person name="McNally E.M."/>
            <person name="Ly C.T."/>
            <person name="Kunkel L.M."/>
        </authorList>
    </citation>
    <scope>NUCLEOTIDE SEQUENCE [MRNA] (ISOFORM 1)</scope>
    <source>
        <tissue>Heart</tissue>
    </source>
</reference>
<reference key="2">
    <citation type="submission" date="1997-07" db="EMBL/GenBank/DDBJ databases">
        <authorList>
            <person name="Nigro V."/>
        </authorList>
    </citation>
    <scope>NUCLEOTIDE SEQUENCE [MRNA] (ISOFORM 1)</scope>
    <source>
        <tissue>Heart</tissue>
    </source>
</reference>
<reference key="3">
    <citation type="submission" date="2002-05" db="EMBL/GenBank/DDBJ databases">
        <title>Epsilon-sarcoglycan mutations in three ethnically diverse families segregating Myoclonus-Dystonia.</title>
        <authorList>
            <person name="Dagvadorj A."/>
        </authorList>
    </citation>
    <scope>NUCLEOTIDE SEQUENCE [MRNA] (ISOFORM 1)</scope>
</reference>
<reference key="4">
    <citation type="journal article" date="2003" name="Genome Res.">
        <title>The secreted protein discovery initiative (SPDI), a large-scale effort to identify novel human secreted and transmembrane proteins: a bioinformatics assessment.</title>
        <authorList>
            <person name="Clark H.F."/>
            <person name="Gurney A.L."/>
            <person name="Abaya E."/>
            <person name="Baker K."/>
            <person name="Baldwin D.T."/>
            <person name="Brush J."/>
            <person name="Chen J."/>
            <person name="Chow B."/>
            <person name="Chui C."/>
            <person name="Crowley C."/>
            <person name="Currell B."/>
            <person name="Deuel B."/>
            <person name="Dowd P."/>
            <person name="Eaton D."/>
            <person name="Foster J.S."/>
            <person name="Grimaldi C."/>
            <person name="Gu Q."/>
            <person name="Hass P.E."/>
            <person name="Heldens S."/>
            <person name="Huang A."/>
            <person name="Kim H.S."/>
            <person name="Klimowski L."/>
            <person name="Jin Y."/>
            <person name="Johnson S."/>
            <person name="Lee J."/>
            <person name="Lewis L."/>
            <person name="Liao D."/>
            <person name="Mark M.R."/>
            <person name="Robbie E."/>
            <person name="Sanchez C."/>
            <person name="Schoenfeld J."/>
            <person name="Seshagiri S."/>
            <person name="Simmons L."/>
            <person name="Singh J."/>
            <person name="Smith V."/>
            <person name="Stinson J."/>
            <person name="Vagts A."/>
            <person name="Vandlen R.L."/>
            <person name="Watanabe C."/>
            <person name="Wieand D."/>
            <person name="Woods K."/>
            <person name="Xie M.-H."/>
            <person name="Yansura D.G."/>
            <person name="Yi S."/>
            <person name="Yu G."/>
            <person name="Yuan J."/>
            <person name="Zhang M."/>
            <person name="Zhang Z."/>
            <person name="Goddard A.D."/>
            <person name="Wood W.I."/>
            <person name="Godowski P.J."/>
            <person name="Gray A.M."/>
        </authorList>
    </citation>
    <scope>NUCLEOTIDE SEQUENCE [LARGE SCALE MRNA] (ISOFORM 1)</scope>
</reference>
<reference key="5">
    <citation type="journal article" date="2004" name="Nat. Genet.">
        <title>Complete sequencing and characterization of 21,243 full-length human cDNAs.</title>
        <authorList>
            <person name="Ota T."/>
            <person name="Suzuki Y."/>
            <person name="Nishikawa T."/>
            <person name="Otsuki T."/>
            <person name="Sugiyama T."/>
            <person name="Irie R."/>
            <person name="Wakamatsu A."/>
            <person name="Hayashi K."/>
            <person name="Sato H."/>
            <person name="Nagai K."/>
            <person name="Kimura K."/>
            <person name="Makita H."/>
            <person name="Sekine M."/>
            <person name="Obayashi M."/>
            <person name="Nishi T."/>
            <person name="Shibahara T."/>
            <person name="Tanaka T."/>
            <person name="Ishii S."/>
            <person name="Yamamoto J."/>
            <person name="Saito K."/>
            <person name="Kawai Y."/>
            <person name="Isono Y."/>
            <person name="Nakamura Y."/>
            <person name="Nagahari K."/>
            <person name="Murakami K."/>
            <person name="Yasuda T."/>
            <person name="Iwayanagi T."/>
            <person name="Wagatsuma M."/>
            <person name="Shiratori A."/>
            <person name="Sudo H."/>
            <person name="Hosoiri T."/>
            <person name="Kaku Y."/>
            <person name="Kodaira H."/>
            <person name="Kondo H."/>
            <person name="Sugawara M."/>
            <person name="Takahashi M."/>
            <person name="Kanda K."/>
            <person name="Yokoi T."/>
            <person name="Furuya T."/>
            <person name="Kikkawa E."/>
            <person name="Omura Y."/>
            <person name="Abe K."/>
            <person name="Kamihara K."/>
            <person name="Katsuta N."/>
            <person name="Sato K."/>
            <person name="Tanikawa M."/>
            <person name="Yamazaki M."/>
            <person name="Ninomiya K."/>
            <person name="Ishibashi T."/>
            <person name="Yamashita H."/>
            <person name="Murakawa K."/>
            <person name="Fujimori K."/>
            <person name="Tanai H."/>
            <person name="Kimata M."/>
            <person name="Watanabe M."/>
            <person name="Hiraoka S."/>
            <person name="Chiba Y."/>
            <person name="Ishida S."/>
            <person name="Ono Y."/>
            <person name="Takiguchi S."/>
            <person name="Watanabe S."/>
            <person name="Yosida M."/>
            <person name="Hotuta T."/>
            <person name="Kusano J."/>
            <person name="Kanehori K."/>
            <person name="Takahashi-Fujii A."/>
            <person name="Hara H."/>
            <person name="Tanase T.-O."/>
            <person name="Nomura Y."/>
            <person name="Togiya S."/>
            <person name="Komai F."/>
            <person name="Hara R."/>
            <person name="Takeuchi K."/>
            <person name="Arita M."/>
            <person name="Imose N."/>
            <person name="Musashino K."/>
            <person name="Yuuki H."/>
            <person name="Oshima A."/>
            <person name="Sasaki N."/>
            <person name="Aotsuka S."/>
            <person name="Yoshikawa Y."/>
            <person name="Matsunawa H."/>
            <person name="Ichihara T."/>
            <person name="Shiohata N."/>
            <person name="Sano S."/>
            <person name="Moriya S."/>
            <person name="Momiyama H."/>
            <person name="Satoh N."/>
            <person name="Takami S."/>
            <person name="Terashima Y."/>
            <person name="Suzuki O."/>
            <person name="Nakagawa S."/>
            <person name="Senoh A."/>
            <person name="Mizoguchi H."/>
            <person name="Goto Y."/>
            <person name="Shimizu F."/>
            <person name="Wakebe H."/>
            <person name="Hishigaki H."/>
            <person name="Watanabe T."/>
            <person name="Sugiyama A."/>
            <person name="Takemoto M."/>
            <person name="Kawakami B."/>
            <person name="Yamazaki M."/>
            <person name="Watanabe K."/>
            <person name="Kumagai A."/>
            <person name="Itakura S."/>
            <person name="Fukuzumi Y."/>
            <person name="Fujimori Y."/>
            <person name="Komiyama M."/>
            <person name="Tashiro H."/>
            <person name="Tanigami A."/>
            <person name="Fujiwara T."/>
            <person name="Ono T."/>
            <person name="Yamada K."/>
            <person name="Fujii Y."/>
            <person name="Ozaki K."/>
            <person name="Hirao M."/>
            <person name="Ohmori Y."/>
            <person name="Kawabata A."/>
            <person name="Hikiji T."/>
            <person name="Kobatake N."/>
            <person name="Inagaki H."/>
            <person name="Ikema Y."/>
            <person name="Okamoto S."/>
            <person name="Okitani R."/>
            <person name="Kawakami T."/>
            <person name="Noguchi S."/>
            <person name="Itoh T."/>
            <person name="Shigeta K."/>
            <person name="Senba T."/>
            <person name="Matsumura K."/>
            <person name="Nakajima Y."/>
            <person name="Mizuno T."/>
            <person name="Morinaga M."/>
            <person name="Sasaki M."/>
            <person name="Togashi T."/>
            <person name="Oyama M."/>
            <person name="Hata H."/>
            <person name="Watanabe M."/>
            <person name="Komatsu T."/>
            <person name="Mizushima-Sugano J."/>
            <person name="Satoh T."/>
            <person name="Shirai Y."/>
            <person name="Takahashi Y."/>
            <person name="Nakagawa K."/>
            <person name="Okumura K."/>
            <person name="Nagase T."/>
            <person name="Nomura N."/>
            <person name="Kikuchi H."/>
            <person name="Masuho Y."/>
            <person name="Yamashita R."/>
            <person name="Nakai K."/>
            <person name="Yada T."/>
            <person name="Nakamura Y."/>
            <person name="Ohara O."/>
            <person name="Isogai T."/>
            <person name="Sugano S."/>
        </authorList>
    </citation>
    <scope>NUCLEOTIDE SEQUENCE [LARGE SCALE MRNA] (ISOFORM 1)</scope>
    <source>
        <tissue>Brain cortex</tissue>
    </source>
</reference>
<reference key="6">
    <citation type="journal article" date="2003" name="Nature">
        <title>The DNA sequence of human chromosome 7.</title>
        <authorList>
            <person name="Hillier L.W."/>
            <person name="Fulton R.S."/>
            <person name="Fulton L.A."/>
            <person name="Graves T.A."/>
            <person name="Pepin K.H."/>
            <person name="Wagner-McPherson C."/>
            <person name="Layman D."/>
            <person name="Maas J."/>
            <person name="Jaeger S."/>
            <person name="Walker R."/>
            <person name="Wylie K."/>
            <person name="Sekhon M."/>
            <person name="Becker M.C."/>
            <person name="O'Laughlin M.D."/>
            <person name="Schaller M.E."/>
            <person name="Fewell G.A."/>
            <person name="Delehaunty K.D."/>
            <person name="Miner T.L."/>
            <person name="Nash W.E."/>
            <person name="Cordes M."/>
            <person name="Du H."/>
            <person name="Sun H."/>
            <person name="Edwards J."/>
            <person name="Bradshaw-Cordum H."/>
            <person name="Ali J."/>
            <person name="Andrews S."/>
            <person name="Isak A."/>
            <person name="Vanbrunt A."/>
            <person name="Nguyen C."/>
            <person name="Du F."/>
            <person name="Lamar B."/>
            <person name="Courtney L."/>
            <person name="Kalicki J."/>
            <person name="Ozersky P."/>
            <person name="Bielicki L."/>
            <person name="Scott K."/>
            <person name="Holmes A."/>
            <person name="Harkins R."/>
            <person name="Harris A."/>
            <person name="Strong C.M."/>
            <person name="Hou S."/>
            <person name="Tomlinson C."/>
            <person name="Dauphin-Kohlberg S."/>
            <person name="Kozlowicz-Reilly A."/>
            <person name="Leonard S."/>
            <person name="Rohlfing T."/>
            <person name="Rock S.M."/>
            <person name="Tin-Wollam A.-M."/>
            <person name="Abbott A."/>
            <person name="Minx P."/>
            <person name="Maupin R."/>
            <person name="Strowmatt C."/>
            <person name="Latreille P."/>
            <person name="Miller N."/>
            <person name="Johnson D."/>
            <person name="Murray J."/>
            <person name="Woessner J.P."/>
            <person name="Wendl M.C."/>
            <person name="Yang S.-P."/>
            <person name="Schultz B.R."/>
            <person name="Wallis J.W."/>
            <person name="Spieth J."/>
            <person name="Bieri T.A."/>
            <person name="Nelson J.O."/>
            <person name="Berkowicz N."/>
            <person name="Wohldmann P.E."/>
            <person name="Cook L.L."/>
            <person name="Hickenbotham M.T."/>
            <person name="Eldred J."/>
            <person name="Williams D."/>
            <person name="Bedell J.A."/>
            <person name="Mardis E.R."/>
            <person name="Clifton S.W."/>
            <person name="Chissoe S.L."/>
            <person name="Marra M.A."/>
            <person name="Raymond C."/>
            <person name="Haugen E."/>
            <person name="Gillett W."/>
            <person name="Zhou Y."/>
            <person name="James R."/>
            <person name="Phelps K."/>
            <person name="Iadanoto S."/>
            <person name="Bubb K."/>
            <person name="Simms E."/>
            <person name="Levy R."/>
            <person name="Clendenning J."/>
            <person name="Kaul R."/>
            <person name="Kent W.J."/>
            <person name="Furey T.S."/>
            <person name="Baertsch R.A."/>
            <person name="Brent M.R."/>
            <person name="Keibler E."/>
            <person name="Flicek P."/>
            <person name="Bork P."/>
            <person name="Suyama M."/>
            <person name="Bailey J.A."/>
            <person name="Portnoy M.E."/>
            <person name="Torrents D."/>
            <person name="Chinwalla A.T."/>
            <person name="Gish W.R."/>
            <person name="Eddy S.R."/>
            <person name="McPherson J.D."/>
            <person name="Olson M.V."/>
            <person name="Eichler E.E."/>
            <person name="Green E.D."/>
            <person name="Waterston R.H."/>
            <person name="Wilson R.K."/>
        </authorList>
    </citation>
    <scope>NUCLEOTIDE SEQUENCE [LARGE SCALE GENOMIC DNA]</scope>
</reference>
<reference key="7">
    <citation type="submission" date="2005-09" db="EMBL/GenBank/DDBJ databases">
        <authorList>
            <person name="Mural R.J."/>
            <person name="Istrail S."/>
            <person name="Sutton G.G."/>
            <person name="Florea L."/>
            <person name="Halpern A.L."/>
            <person name="Mobarry C.M."/>
            <person name="Lippert R."/>
            <person name="Walenz B."/>
            <person name="Shatkay H."/>
            <person name="Dew I."/>
            <person name="Miller J.R."/>
            <person name="Flanigan M.J."/>
            <person name="Edwards N.J."/>
            <person name="Bolanos R."/>
            <person name="Fasulo D."/>
            <person name="Halldorsson B.V."/>
            <person name="Hannenhalli S."/>
            <person name="Turner R."/>
            <person name="Yooseph S."/>
            <person name="Lu F."/>
            <person name="Nusskern D.R."/>
            <person name="Shue B.C."/>
            <person name="Zheng X.H."/>
            <person name="Zhong F."/>
            <person name="Delcher A.L."/>
            <person name="Huson D.H."/>
            <person name="Kravitz S.A."/>
            <person name="Mouchard L."/>
            <person name="Reinert K."/>
            <person name="Remington K.A."/>
            <person name="Clark A.G."/>
            <person name="Waterman M.S."/>
            <person name="Eichler E.E."/>
            <person name="Adams M.D."/>
            <person name="Hunkapiller M.W."/>
            <person name="Myers E.W."/>
            <person name="Venter J.C."/>
        </authorList>
    </citation>
    <scope>NUCLEOTIDE SEQUENCE [LARGE SCALE GENOMIC DNA]</scope>
</reference>
<reference key="8">
    <citation type="journal article" date="2004" name="Genome Res.">
        <title>The status, quality, and expansion of the NIH full-length cDNA project: the Mammalian Gene Collection (MGC).</title>
        <authorList>
            <consortium name="The MGC Project Team"/>
        </authorList>
    </citation>
    <scope>NUCLEOTIDE SEQUENCE [LARGE SCALE MRNA] (ISOFORM 1)</scope>
    <scope>VARIANTS SER-49 AND HIS-399</scope>
    <source>
        <tissue>Testis</tissue>
    </source>
</reference>
<reference key="9">
    <citation type="journal article" date="2004" name="Brain Res. Mol. Brain Res.">
        <title>Identification and characterization of epsilon-sarcoglycans in the central nervous system.</title>
        <authorList>
            <person name="Nishiyama A."/>
            <person name="Endo T."/>
            <person name="Takeda S."/>
            <person name="Imamura M."/>
        </authorList>
    </citation>
    <scope>NUCLEOTIDE SEQUENCE [MRNA] OF 14-437 (ISOFORM 2)</scope>
    <scope>ALTERNATIVE SPLICING</scope>
    <source>
        <tissue>Brain</tissue>
    </source>
</reference>
<reference key="10">
    <citation type="journal article" date="1997" name="J. Biol. Chem.">
        <title>Epsilon-sarcoglycan, a broadly expressed homologue of the gene mutated in limb-girdle muscular dystrophy 2D.</title>
        <authorList>
            <person name="Ettinger A.J."/>
            <person name="Feng G."/>
            <person name="Sanes J.R."/>
        </authorList>
    </citation>
    <scope>NUCLEOTIDE SEQUENCE [MRNA] OF 293-437 (ISOFORM 1)</scope>
</reference>
<reference key="11">
    <citation type="journal article" date="1998" name="J. Biol. Chem.">
        <authorList>
            <person name="Ettinger A.J."/>
            <person name="Feng G."/>
            <person name="Sanes J.R."/>
        </authorList>
    </citation>
    <scope>ERRATUM OF PUBMED:9405466</scope>
</reference>
<reference key="12">
    <citation type="journal article" date="2001" name="Nat. Genet.">
        <title>Mutations in the gene encoding epsilon-sarcoglycan cause myoclonus-dystonia syndrome.</title>
        <authorList>
            <person name="Zimprich A."/>
            <person name="Grabowski M."/>
            <person name="Asmus F."/>
            <person name="Naumann M."/>
            <person name="Berg D."/>
            <person name="Bertram M."/>
            <person name="Scheidtmann K."/>
            <person name="Kern P."/>
            <person name="Winkelmann J."/>
            <person name="Muller-Myhsok B."/>
            <person name="Riedel L."/>
            <person name="Bauer M."/>
            <person name="Muller T."/>
            <person name="Castro M."/>
            <person name="Meitinger T."/>
            <person name="Strom T.M."/>
            <person name="Gasser T."/>
        </authorList>
    </citation>
    <scope>INVOLVEMENT IN DYT11</scope>
</reference>
<reference key="13">
    <citation type="journal article" date="2009" name="J. Proteome Res.">
        <title>Glycoproteomics analysis of human liver tissue by combination of multiple enzyme digestion and hydrazide chemistry.</title>
        <authorList>
            <person name="Chen R."/>
            <person name="Jiang X."/>
            <person name="Sun D."/>
            <person name="Han G."/>
            <person name="Wang F."/>
            <person name="Ye M."/>
            <person name="Wang L."/>
            <person name="Zou H."/>
        </authorList>
    </citation>
    <scope>GLYCOSYLATION [LARGE SCALE ANALYSIS] AT ASN-200</scope>
    <source>
        <tissue>Liver</tissue>
    </source>
</reference>
<reference key="14">
    <citation type="journal article" date="2002" name="Ann. Neurol.">
        <title>Epsilon-sarcoglycan mutations found in combination with other dystonia gene mutations.</title>
        <authorList>
            <person name="Klein C."/>
            <person name="Liu L."/>
            <person name="Doheny D."/>
            <person name="Kock N."/>
            <person name="Muller B."/>
            <person name="de Carvalho Aguiar P."/>
            <person name="Leung J."/>
            <person name="de Leon D."/>
            <person name="Bressman S.B."/>
            <person name="Silverman J."/>
            <person name="Smith C."/>
            <person name="Danisi F."/>
            <person name="Morrison C."/>
            <person name="Walker R.H."/>
            <person name="Velickovic M."/>
            <person name="Schwinger E."/>
            <person name="Kramer P.L."/>
            <person name="Breakefield X.O."/>
            <person name="Brin M.F."/>
            <person name="Ozelius L.J."/>
        </authorList>
    </citation>
    <scope>VARIANT DYT11 ARG-196</scope>
</reference>
<reference key="15">
    <citation type="journal article" date="2004" name="J. Neurol. Neurosurg. Psych.">
        <title>Genetic heterogeneity in ten families with myoclonus-dystonia.</title>
        <authorList>
            <person name="Schule B."/>
            <person name="Kock N."/>
            <person name="Svetel M."/>
            <person name="Dragasevic N."/>
            <person name="Hedrich K."/>
            <person name="De Carvalho Aguiar P."/>
            <person name="Liu L."/>
            <person name="Kabakci K."/>
            <person name="Garrels J."/>
            <person name="Meyer E.M."/>
            <person name="Berisavac I."/>
            <person name="Schwinger E."/>
            <person name="Kramer P.L."/>
            <person name="Ozelius L.J."/>
            <person name="Klein C."/>
            <person name="Kostic V."/>
        </authorList>
    </citation>
    <scope>VARIANT DYT11 ARG-60</scope>
</reference>
<reference key="16">
    <citation type="journal article" date="2004" name="Neurology">
        <title>Myoclonus-dystonia: detection of novel, recurrent, and de novo SGCE mutations.</title>
        <authorList>
            <person name="Hedrich K."/>
            <person name="Meyer E.M."/>
            <person name="Schule B."/>
            <person name="Kock N."/>
            <person name="de Carvalho Aguiar P."/>
            <person name="Wiegers K."/>
            <person name="Koelman J.H."/>
            <person name="Garrels J."/>
            <person name="Durr R."/>
            <person name="Liu L."/>
            <person name="Schwinger E."/>
            <person name="Ozelius L.J."/>
            <person name="Landwehrmeyer B."/>
            <person name="Stoessl A.J."/>
            <person name="Tijssen M.A."/>
            <person name="Klein C."/>
        </authorList>
    </citation>
    <scope>VARIANT DYT11 PRO-60</scope>
</reference>
<reference key="17">
    <citation type="journal article" date="2006" name="J. Med. Genet.">
        <title>Epsilon sarcoglycan mutations and phenotype in French patients with myoclonic syndromes.</title>
        <authorList>
            <person name="Tezenas du Montcel S."/>
            <person name="Clot F."/>
            <person name="Vidailhet M."/>
            <person name="Roze E."/>
            <person name="Damier P."/>
            <person name="Jedynak C.P."/>
            <person name="Camuzat A."/>
            <person name="Lagueny A."/>
            <person name="Vercueil L."/>
            <person name="Doummar D."/>
            <person name="Guyant-Marechal L."/>
            <person name="Houeto J.L."/>
            <person name="Ponsot G."/>
            <person name="Thobois S."/>
            <person name="Cournelle M.A."/>
            <person name="Durr A."/>
            <person name="Durif F."/>
            <person name="Echenne B."/>
            <person name="Hannequin D."/>
            <person name="Tranchant C."/>
            <person name="Brice A."/>
        </authorList>
    </citation>
    <scope>VARIANTS DYT11 THR-92; CYS-115 AND TYR-271</scope>
</reference>
<reference key="18">
    <citation type="journal article" date="2008" name="Mov. Disord.">
        <title>Myoclonus-dystonia syndrome: clinical presentation, disease course, and genetic features in 11 families.</title>
        <authorList>
            <person name="Nardocci N."/>
            <person name="Zorzi G."/>
            <person name="Barzaghi C."/>
            <person name="Zibordi F."/>
            <person name="Ciano C."/>
            <person name="Ghezzi D."/>
            <person name="Garavaglia B."/>
        </authorList>
    </citation>
    <scope>VARIANT DYT11 ARG-112</scope>
</reference>
<reference key="19">
    <citation type="journal article" date="2008" name="Mov. Disord.">
        <title>Phenotypic spectrum and sex effects in eleven myoclonus-dystonia families with epsilon-sarcoglycan mutations.</title>
        <authorList>
            <person name="Raymond D."/>
            <person name="Saunders-Pullman R."/>
            <person name="de Carvalho Aguiar P."/>
            <person name="Schule B."/>
            <person name="Kock N."/>
            <person name="Friedman J."/>
            <person name="Harris J."/>
            <person name="Ford B."/>
            <person name="Frucht S."/>
            <person name="Heiman G.A."/>
            <person name="Jennings D."/>
            <person name="Doheny D."/>
            <person name="Brin M.F."/>
            <person name="de Leon Brin D."/>
            <person name="Multhaupt-Buell T."/>
            <person name="Lang A.E."/>
            <person name="Kurlan R."/>
            <person name="Klein C."/>
            <person name="Ozelius L."/>
            <person name="Bressman S."/>
        </authorList>
    </citation>
    <scope>VARIANTS DYT11 ARG-36 AND PRO-184</scope>
</reference>
<reference key="20">
    <citation type="journal article" date="2008" name="Neurology">
        <title>Myoclonus-dystonia: clinical and electrophysiologic pattern related to SGCE mutations.</title>
        <authorList>
            <person name="Roze E."/>
            <person name="Apartis E."/>
            <person name="Clot F."/>
            <person name="Dorison N."/>
            <person name="Thobois S."/>
            <person name="Guyant-Marechal L."/>
            <person name="Tranchant C."/>
            <person name="Damier P."/>
            <person name="Doummar D."/>
            <person name="Bahi-Buisson N."/>
            <person name="Andre-Obadia N."/>
            <person name="Maltete D."/>
            <person name="Echaniz-Laguna A."/>
            <person name="Pereon Y."/>
            <person name="Beaugendre Y."/>
            <person name="Dupont S."/>
            <person name="De Greslan T."/>
            <person name="Jedynak C.P."/>
            <person name="Ponsot G."/>
            <person name="Dussaule J.C."/>
            <person name="Brice A."/>
            <person name="Durr A."/>
            <person name="Vidailhet M."/>
        </authorList>
    </citation>
    <scope>VARIANTS DYT11 GLY-100 AND CYS-115</scope>
</reference>
<reference key="21">
    <citation type="journal article" date="2009" name="J. Neurol. Neurosurg. Psych.">
        <title>Myoclonus-dystonia: clinical and genetic evaluation of a large cohort.</title>
        <authorList>
            <person name="Ritz K."/>
            <person name="Gerrits M.C."/>
            <person name="Foncke E.M."/>
            <person name="van Ruissen F."/>
            <person name="van der Linden C."/>
            <person name="Vergouwen M.D."/>
            <person name="Bloem B.R."/>
            <person name="Vandenberghe W."/>
            <person name="Crols R."/>
            <person name="Speelman J.D."/>
            <person name="Baas F."/>
            <person name="Tijssen M.A."/>
        </authorList>
    </citation>
    <scope>VARIANTS DYT11 SER-175; CYS-177 AND ARG-270</scope>
</reference>
<reference key="22">
    <citation type="journal article" date="2011" name="Hum. Mutat.">
        <title>A gain-of-glycosylation mutation associated with myoclonus-dystonia syndrome affects trafficking and processing of mouse epsilon-sarcoglycan in the late secretory pathway.</title>
        <authorList>
            <person name="Waite A."/>
            <person name="De Rosa M.C."/>
            <person name="Brancaccio A."/>
            <person name="Blake D.J."/>
        </authorList>
    </citation>
    <scope>CHARACTERIZATION OF VARIANTS DYT11 ARG-60; PRO-60; THR-92; CYS-115; ARG-270 AND TYR-271</scope>
</reference>
<dbReference type="EMBL" id="AF036364">
    <property type="protein sequence ID" value="AAC04368.1"/>
    <property type="status" value="ALT_INIT"/>
    <property type="molecule type" value="mRNA"/>
</dbReference>
<dbReference type="EMBL" id="AJ000534">
    <property type="protein sequence ID" value="CAA04167.1"/>
    <property type="molecule type" value="mRNA"/>
</dbReference>
<dbReference type="EMBL" id="AF516515">
    <property type="protein sequence ID" value="AAM64204.1"/>
    <property type="molecule type" value="mRNA"/>
</dbReference>
<dbReference type="EMBL" id="AY359042">
    <property type="protein sequence ID" value="AAQ89401.1"/>
    <property type="molecule type" value="mRNA"/>
</dbReference>
<dbReference type="EMBL" id="AK313438">
    <property type="protein sequence ID" value="BAG36229.1"/>
    <property type="molecule type" value="mRNA"/>
</dbReference>
<dbReference type="EMBL" id="AC069292">
    <property type="protein sequence ID" value="AAS07485.1"/>
    <property type="molecule type" value="Genomic_DNA"/>
</dbReference>
<dbReference type="EMBL" id="CH471091">
    <property type="protein sequence ID" value="EAW76784.1"/>
    <property type="molecule type" value="Genomic_DNA"/>
</dbReference>
<dbReference type="EMBL" id="CH471091">
    <property type="protein sequence ID" value="EAW76785.1"/>
    <property type="molecule type" value="Genomic_DNA"/>
</dbReference>
<dbReference type="EMBL" id="CH471091">
    <property type="protein sequence ID" value="EAW76786.1"/>
    <property type="molecule type" value="Genomic_DNA"/>
</dbReference>
<dbReference type="EMBL" id="CH471091">
    <property type="protein sequence ID" value="EAW76788.1"/>
    <property type="molecule type" value="Genomic_DNA"/>
</dbReference>
<dbReference type="EMBL" id="BC021709">
    <property type="protein sequence ID" value="AAH21709.1"/>
    <property type="molecule type" value="mRNA"/>
</dbReference>
<dbReference type="EMBL" id="AB117974">
    <property type="protein sequence ID" value="BAD21206.1"/>
    <property type="status" value="ALT_INIT"/>
    <property type="molecule type" value="mRNA"/>
</dbReference>
<dbReference type="EMBL" id="AF031920">
    <property type="protein sequence ID" value="AAC14021.1"/>
    <property type="molecule type" value="mRNA"/>
</dbReference>
<dbReference type="CCDS" id="CCDS47642.1">
    <molecule id="O43556-3"/>
</dbReference>
<dbReference type="CCDS" id="CCDS47643.1">
    <molecule id="O43556-4"/>
</dbReference>
<dbReference type="CCDS" id="CCDS5637.1">
    <molecule id="O43556-1"/>
</dbReference>
<dbReference type="RefSeq" id="NP_001092870.1">
    <molecule id="O43556-3"/>
    <property type="nucleotide sequence ID" value="NM_001099400.2"/>
</dbReference>
<dbReference type="RefSeq" id="NP_001092871.1">
    <molecule id="O43556-4"/>
    <property type="nucleotide sequence ID" value="NM_001099401.2"/>
</dbReference>
<dbReference type="RefSeq" id="NP_001288068.1">
    <property type="nucleotide sequence ID" value="NM_001301139.1"/>
</dbReference>
<dbReference type="RefSeq" id="NP_003910.1">
    <molecule id="O43556-1"/>
    <property type="nucleotide sequence ID" value="NM_003919.3"/>
</dbReference>
<dbReference type="SMR" id="O43556"/>
<dbReference type="BioGRID" id="114424">
    <property type="interactions" value="30"/>
</dbReference>
<dbReference type="ComplexPortal" id="CPX-2453">
    <property type="entry name" value="Dystrophin glycoprotein complex, CNS variant"/>
</dbReference>
<dbReference type="CORUM" id="O43556"/>
<dbReference type="FunCoup" id="O43556">
    <property type="interactions" value="291"/>
</dbReference>
<dbReference type="IntAct" id="O43556">
    <property type="interactions" value="19"/>
</dbReference>
<dbReference type="STRING" id="9606.ENSP00000496268"/>
<dbReference type="GlyConnect" id="1218">
    <property type="glycosylation" value="2 N-Linked glycans (1 site)"/>
</dbReference>
<dbReference type="GlyCosmos" id="O43556">
    <property type="glycosylation" value="1 site, 2 glycans"/>
</dbReference>
<dbReference type="GlyGen" id="O43556">
    <property type="glycosylation" value="1 site, 5 N-linked glycans (1 site)"/>
</dbReference>
<dbReference type="iPTMnet" id="O43556"/>
<dbReference type="PhosphoSitePlus" id="O43556"/>
<dbReference type="SwissPalm" id="O43556"/>
<dbReference type="BioMuta" id="SGCE"/>
<dbReference type="jPOST" id="O43556"/>
<dbReference type="MassIVE" id="O43556"/>
<dbReference type="PaxDb" id="9606-ENSP00000398930"/>
<dbReference type="PeptideAtlas" id="O43556"/>
<dbReference type="ProteomicsDB" id="20035"/>
<dbReference type="ProteomicsDB" id="33967"/>
<dbReference type="ProteomicsDB" id="49048">
    <molecule id="O43556-1"/>
</dbReference>
<dbReference type="Pumba" id="O43556"/>
<dbReference type="Antibodypedia" id="30109">
    <property type="antibodies" value="143 antibodies from 27 providers"/>
</dbReference>
<dbReference type="DNASU" id="8910"/>
<dbReference type="Ensembl" id="ENST00000445866.7">
    <molecule id="O43556-4"/>
    <property type="protein sequence ID" value="ENSP00000398930.2"/>
    <property type="gene ID" value="ENSG00000127990.19"/>
</dbReference>
<dbReference type="Ensembl" id="ENST00000642933.1">
    <molecule id="O43556-3"/>
    <property type="protein sequence ID" value="ENSP00000496237.1"/>
    <property type="gene ID" value="ENSG00000127990.19"/>
</dbReference>
<dbReference type="Ensembl" id="ENST00000648936.2">
    <molecule id="O43556-1"/>
    <property type="protein sequence ID" value="ENSP00000497130.1"/>
    <property type="gene ID" value="ENSG00000127990.19"/>
</dbReference>
<dbReference type="GeneID" id="8910"/>
<dbReference type="KEGG" id="hsa:8910"/>
<dbReference type="MANE-Select" id="ENST00000648936.2">
    <property type="protein sequence ID" value="ENSP00000497130.1"/>
    <property type="RefSeq nucleotide sequence ID" value="NM_003919.3"/>
    <property type="RefSeq protein sequence ID" value="NP_003910.1"/>
</dbReference>
<dbReference type="UCSC" id="uc003unl.3">
    <molecule id="O43556-1"/>
    <property type="organism name" value="human"/>
</dbReference>
<dbReference type="AGR" id="HGNC:10808"/>
<dbReference type="CTD" id="8910"/>
<dbReference type="DisGeNET" id="8910"/>
<dbReference type="GeneCards" id="SGCE"/>
<dbReference type="GeneReviews" id="SGCE"/>
<dbReference type="HGNC" id="HGNC:10808">
    <property type="gene designation" value="SGCE"/>
</dbReference>
<dbReference type="HPA" id="ENSG00000127990">
    <property type="expression patterns" value="Low tissue specificity"/>
</dbReference>
<dbReference type="MalaCards" id="SGCE"/>
<dbReference type="MIM" id="159900">
    <property type="type" value="phenotype"/>
</dbReference>
<dbReference type="MIM" id="604149">
    <property type="type" value="gene"/>
</dbReference>
<dbReference type="neXtProt" id="NX_O43556"/>
<dbReference type="OpenTargets" id="ENSG00000127990"/>
<dbReference type="Orphanet" id="36899">
    <property type="disease" value="Myoclonus-dystonia syndrome"/>
</dbReference>
<dbReference type="PharmGKB" id="PA35719"/>
<dbReference type="VEuPathDB" id="HostDB:ENSG00000127990"/>
<dbReference type="eggNOG" id="KOG4482">
    <property type="taxonomic scope" value="Eukaryota"/>
</dbReference>
<dbReference type="GeneTree" id="ENSGT00390000005672"/>
<dbReference type="InParanoid" id="O43556"/>
<dbReference type="OrthoDB" id="10019906at2759"/>
<dbReference type="PAN-GO" id="O43556">
    <property type="GO annotations" value="1 GO annotation based on evolutionary models"/>
</dbReference>
<dbReference type="PhylomeDB" id="O43556"/>
<dbReference type="TreeFam" id="TF314655"/>
<dbReference type="PathwayCommons" id="O43556"/>
<dbReference type="Reactome" id="R-HSA-9913351">
    <property type="pathway name" value="Formation of the dystrophin-glycoprotein complex (DGC)"/>
</dbReference>
<dbReference type="SignaLink" id="O43556"/>
<dbReference type="BioGRID-ORCS" id="8910">
    <property type="hits" value="38 hits in 1153 CRISPR screens"/>
</dbReference>
<dbReference type="ChiTaRS" id="SGCE">
    <property type="organism name" value="human"/>
</dbReference>
<dbReference type="GeneWiki" id="SGCE"/>
<dbReference type="GenomeRNAi" id="8910"/>
<dbReference type="Pharos" id="O43556">
    <property type="development level" value="Tbio"/>
</dbReference>
<dbReference type="PRO" id="PR:O43556"/>
<dbReference type="Proteomes" id="UP000005640">
    <property type="component" value="Chromosome 7"/>
</dbReference>
<dbReference type="RNAct" id="O43556">
    <property type="molecule type" value="protein"/>
</dbReference>
<dbReference type="Bgee" id="ENSG00000127990">
    <property type="expression patterns" value="Expressed in tendon of biceps brachii and 207 other cell types or tissues"/>
</dbReference>
<dbReference type="ExpressionAtlas" id="O43556">
    <property type="expression patterns" value="baseline and differential"/>
</dbReference>
<dbReference type="GO" id="GO:0005856">
    <property type="term" value="C:cytoskeleton"/>
    <property type="evidence" value="ECO:0007669"/>
    <property type="project" value="UniProtKB-SubCell"/>
</dbReference>
<dbReference type="GO" id="GO:0032590">
    <property type="term" value="C:dendrite membrane"/>
    <property type="evidence" value="ECO:0000250"/>
    <property type="project" value="UniProtKB"/>
</dbReference>
<dbReference type="GO" id="GO:0016010">
    <property type="term" value="C:dystrophin-associated glycoprotein complex"/>
    <property type="evidence" value="ECO:0000314"/>
    <property type="project" value="UniProtKB"/>
</dbReference>
<dbReference type="GO" id="GO:0005789">
    <property type="term" value="C:endoplasmic reticulum membrane"/>
    <property type="evidence" value="ECO:0000304"/>
    <property type="project" value="Reactome"/>
</dbReference>
<dbReference type="GO" id="GO:0005794">
    <property type="term" value="C:Golgi apparatus"/>
    <property type="evidence" value="ECO:0000250"/>
    <property type="project" value="UniProtKB"/>
</dbReference>
<dbReference type="GO" id="GO:0000139">
    <property type="term" value="C:Golgi membrane"/>
    <property type="evidence" value="ECO:0000304"/>
    <property type="project" value="Reactome"/>
</dbReference>
<dbReference type="GO" id="GO:0005886">
    <property type="term" value="C:plasma membrane"/>
    <property type="evidence" value="ECO:0000250"/>
    <property type="project" value="UniProtKB"/>
</dbReference>
<dbReference type="GO" id="GO:0016012">
    <property type="term" value="C:sarcoglycan complex"/>
    <property type="evidence" value="ECO:0000318"/>
    <property type="project" value="GO_Central"/>
</dbReference>
<dbReference type="GO" id="GO:0042383">
    <property type="term" value="C:sarcolemma"/>
    <property type="evidence" value="ECO:0007669"/>
    <property type="project" value="UniProtKB-SubCell"/>
</dbReference>
<dbReference type="GO" id="GO:0007160">
    <property type="term" value="P:cell-matrix adhesion"/>
    <property type="evidence" value="ECO:0000304"/>
    <property type="project" value="ProtInc"/>
</dbReference>
<dbReference type="GO" id="GO:0007517">
    <property type="term" value="P:muscle organ development"/>
    <property type="evidence" value="ECO:0000304"/>
    <property type="project" value="ProtInc"/>
</dbReference>
<dbReference type="InterPro" id="IPR006644">
    <property type="entry name" value="Cadg"/>
</dbReference>
<dbReference type="InterPro" id="IPR008908">
    <property type="entry name" value="Sarcoglycan_alpha/epsilon"/>
</dbReference>
<dbReference type="InterPro" id="IPR048347">
    <property type="entry name" value="Sarcoglycan_C"/>
</dbReference>
<dbReference type="InterPro" id="IPR048346">
    <property type="entry name" value="Sarcoglycan_N"/>
</dbReference>
<dbReference type="PANTHER" id="PTHR10132">
    <property type="entry name" value="ALPHA-/EPSILON-SARCOGLYCAN FAMILY MEMBER"/>
    <property type="match status" value="1"/>
</dbReference>
<dbReference type="PANTHER" id="PTHR10132:SF17">
    <property type="entry name" value="EPSILON-SARCOGLYCAN"/>
    <property type="match status" value="1"/>
</dbReference>
<dbReference type="Pfam" id="PF05510">
    <property type="entry name" value="Sarcoglycan_2"/>
    <property type="match status" value="1"/>
</dbReference>
<dbReference type="Pfam" id="PF20989">
    <property type="entry name" value="Sarcoglycan_2_C"/>
    <property type="match status" value="1"/>
</dbReference>
<dbReference type="SMART" id="SM00736">
    <property type="entry name" value="CADG"/>
    <property type="match status" value="1"/>
</dbReference>
<protein>
    <recommendedName>
        <fullName>Epsilon-sarcoglycan</fullName>
        <shortName>Epsilon-SG</shortName>
    </recommendedName>
</protein>
<gene>
    <name type="primary">SGCE</name>
    <name type="synonym">ESG</name>
    <name type="ORF">UNQ433/PRO840</name>
</gene>
<comment type="function">
    <text>Component of the sarcoglycan complex, a subcomplex of the dystrophin-glycoprotein complex which forms a link between the F-actin cytoskeleton and the extracellular matrix.</text>
</comment>
<comment type="subcellular location">
    <subcellularLocation>
        <location evidence="1">Cell membrane</location>
        <location evidence="1">Sarcolemma</location>
        <topology evidence="1">Single-pass membrane protein</topology>
    </subcellularLocation>
    <subcellularLocation>
        <location evidence="1">Cytoplasm</location>
        <location evidence="1">Cytoskeleton</location>
    </subcellularLocation>
    <subcellularLocation>
        <location evidence="1">Cell projection</location>
        <location evidence="1">Dendrite</location>
    </subcellularLocation>
    <subcellularLocation>
        <location evidence="1">Golgi apparatus</location>
    </subcellularLocation>
</comment>
<comment type="alternative products">
    <event type="alternative splicing"/>
    <isoform>
        <id>O43556-1</id>
        <name>1</name>
        <name>epsilon-SG1</name>
        <sequence type="displayed"/>
    </isoform>
    <isoform>
        <id>O43556-3</id>
        <name>2</name>
        <name>epsilon-SG2</name>
        <sequence type="described" ref="VSP_045092 VSP_045093"/>
    </isoform>
    <isoform>
        <id>O43556-4</id>
        <name>3</name>
        <sequence type="described" ref="VSP_054079"/>
    </isoform>
</comment>
<comment type="tissue specificity">
    <text>Ubiquitous.</text>
</comment>
<comment type="PTM">
    <text evidence="1">N-glycosylated.</text>
</comment>
<comment type="PTM">
    <text evidence="1">Ubiquitinated, leading to its degradation by the proteasome.</text>
</comment>
<comment type="disease" evidence="3 4 5 6 8 9 10 11 12 14">
    <disease id="DI-00418">
        <name>Dystonia 11, myoclonic</name>
        <acronym>DYT11</acronym>
        <description>A myoclonic dystonia. Dystonia is defined by the presence of sustained involuntary muscle contractions, often leading to abnormal postures. DYT11 is characterized by involuntary lightning jerks and dystonic movements and postures alleviated by alcohol. Inheritance is autosomal dominant. The age of onset, pattern of body involvement, presence of myoclonus and response to alcohol are all variable.</description>
        <dbReference type="MIM" id="159900"/>
    </disease>
    <text>The disease is caused by variants affecting the gene represented in this entry.</text>
</comment>
<comment type="miscellaneous">
    <molecule>Isoform 2</molecule>
    <text evidence="16">Brain-specific.</text>
</comment>
<comment type="similarity">
    <text evidence="16">Belongs to the sarcoglycan alpha/epsilon family.</text>
</comment>
<comment type="sequence caution" evidence="16">
    <conflict type="erroneous initiation">
        <sequence resource="EMBL-CDS" id="AAC04368"/>
    </conflict>
    <text>Truncated N-terminus.</text>
</comment>
<comment type="sequence caution" evidence="16">
    <conflict type="erroneous initiation">
        <sequence resource="EMBL-CDS" id="BAD21206"/>
    </conflict>
    <text>Truncated N-terminus.</text>
</comment>